<feature type="chain" id="PRO_0000363732" description="Peroxidase 5">
    <location>
        <begin position="1" status="less than"/>
        <end position="15" status="greater than"/>
    </location>
</feature>
<feature type="unsure residue" description="M or F">
    <location>
        <position position="1"/>
    </location>
</feature>
<feature type="unsure residue" description="I or L">
    <location>
        <position position="4"/>
    </location>
</feature>
<feature type="unsure residue" description="L or I">
    <location>
        <position position="7"/>
    </location>
</feature>
<feature type="unsure residue" description="Q or K">
    <location>
        <position position="13"/>
    </location>
</feature>
<feature type="unsure residue" description="I or L">
    <location>
        <position position="14"/>
    </location>
</feature>
<feature type="non-terminal residue">
    <location>
        <position position="1"/>
    </location>
</feature>
<feature type="non-terminal residue">
    <location>
        <position position="15"/>
    </location>
</feature>
<organism>
    <name type="scientific">Capsicum annuum</name>
    <name type="common">Capsicum pepper</name>
    <dbReference type="NCBI Taxonomy" id="4072"/>
    <lineage>
        <taxon>Eukaryota</taxon>
        <taxon>Viridiplantae</taxon>
        <taxon>Streptophyta</taxon>
        <taxon>Embryophyta</taxon>
        <taxon>Tracheophyta</taxon>
        <taxon>Spermatophyta</taxon>
        <taxon>Magnoliopsida</taxon>
        <taxon>eudicotyledons</taxon>
        <taxon>Gunneridae</taxon>
        <taxon>Pentapetalae</taxon>
        <taxon>asterids</taxon>
        <taxon>lamiids</taxon>
        <taxon>Solanales</taxon>
        <taxon>Solanaceae</taxon>
        <taxon>Solanoideae</taxon>
        <taxon>Capsiceae</taxon>
        <taxon>Capsicum</taxon>
    </lineage>
</organism>
<reference evidence="4" key="1">
    <citation type="submission" date="2008-07" db="UniProtKB">
        <authorList>
            <person name="Sabater Jara A.B."/>
            <person name="Almagro L."/>
            <person name="Pedreno M.A."/>
        </authorList>
    </citation>
    <scope>PROTEIN SEQUENCE</scope>
</reference>
<dbReference type="EC" id="1.11.1.7"/>
<dbReference type="GO" id="GO:0005576">
    <property type="term" value="C:extracellular region"/>
    <property type="evidence" value="ECO:0007669"/>
    <property type="project" value="UniProtKB-SubCell"/>
</dbReference>
<dbReference type="GO" id="GO:0140825">
    <property type="term" value="F:lactoperoxidase activity"/>
    <property type="evidence" value="ECO:0007669"/>
    <property type="project" value="UniProtKB-EC"/>
</dbReference>
<dbReference type="GO" id="GO:0046872">
    <property type="term" value="F:metal ion binding"/>
    <property type="evidence" value="ECO:0007669"/>
    <property type="project" value="UniProtKB-KW"/>
</dbReference>
<dbReference type="GO" id="GO:0042744">
    <property type="term" value="P:hydrogen peroxide catabolic process"/>
    <property type="evidence" value="ECO:0007669"/>
    <property type="project" value="UniProtKB-KW"/>
</dbReference>
<name>PER5_CAPAN</name>
<comment type="function">
    <text evidence="4">Removal of H(2)O(2), oxidation of toxic reductants, biosynthesis and degradation of lignin, suberization, auxin catabolism, response to environmental stresses such as wounding, pathogen attack and oxidative stress. These functions might be dependent on each isozyme/isoform in each plant tissue.</text>
</comment>
<comment type="catalytic activity">
    <reaction>
        <text>2 a phenolic donor + H2O2 = 2 a phenolic radical donor + 2 H2O</text>
        <dbReference type="Rhea" id="RHEA:56136"/>
        <dbReference type="ChEBI" id="CHEBI:15377"/>
        <dbReference type="ChEBI" id="CHEBI:16240"/>
        <dbReference type="ChEBI" id="CHEBI:139520"/>
        <dbReference type="ChEBI" id="CHEBI:139521"/>
        <dbReference type="EC" id="1.11.1.7"/>
    </reaction>
</comment>
<comment type="cofactor">
    <cofactor evidence="2 3">
        <name>heme b</name>
        <dbReference type="ChEBI" id="CHEBI:60344"/>
    </cofactor>
    <text evidence="2 3">Binds 1 heme b (iron(II)-protoporphyrin IX) group per subunit.</text>
</comment>
<comment type="cofactor">
    <cofactor evidence="2 3">
        <name>Ca(2+)</name>
        <dbReference type="ChEBI" id="CHEBI:29108"/>
    </cofactor>
    <text evidence="2 3">Binds 2 calcium ions per subunit.</text>
</comment>
<comment type="subcellular location">
    <subcellularLocation>
        <location evidence="1 3">Secreted</location>
    </subcellularLocation>
</comment>
<comment type="similarity">
    <text evidence="3">Belongs to the peroxidase family. Classical plant (class III) peroxidase subfamily.</text>
</comment>
<evidence type="ECO:0000250" key="1">
    <source>
        <dbReference type="UniProtKB" id="P84516"/>
    </source>
</evidence>
<evidence type="ECO:0000250" key="2">
    <source>
        <dbReference type="UniProtKB" id="Q42578"/>
    </source>
</evidence>
<evidence type="ECO:0000255" key="3">
    <source>
        <dbReference type="PROSITE-ProRule" id="PRU00297"/>
    </source>
</evidence>
<evidence type="ECO:0000305" key="4"/>
<accession>P86003</accession>
<proteinExistence type="evidence at protein level"/>
<sequence length="15" mass="1560">MGDISPLTGTNGQIR</sequence>
<keyword id="KW-0106">Calcium</keyword>
<keyword id="KW-0903">Direct protein sequencing</keyword>
<keyword id="KW-0349">Heme</keyword>
<keyword id="KW-0376">Hydrogen peroxide</keyword>
<keyword id="KW-0408">Iron</keyword>
<keyword id="KW-0479">Metal-binding</keyword>
<keyword id="KW-0560">Oxidoreductase</keyword>
<keyword id="KW-0575">Peroxidase</keyword>
<keyword id="KW-0964">Secreted</keyword>
<protein>
    <recommendedName>
        <fullName evidence="2">Peroxidase 5</fullName>
        <ecNumber>1.11.1.7</ecNumber>
    </recommendedName>
</protein>